<name>NDK_DEHM1</name>
<comment type="function">
    <text evidence="1">Major role in the synthesis of nucleoside triphosphates other than ATP. The ATP gamma phosphate is transferred to the NDP beta phosphate via a ping-pong mechanism, using a phosphorylated active-site intermediate.</text>
</comment>
<comment type="catalytic activity">
    <reaction evidence="1">
        <text>a 2'-deoxyribonucleoside 5'-diphosphate + ATP = a 2'-deoxyribonucleoside 5'-triphosphate + ADP</text>
        <dbReference type="Rhea" id="RHEA:44640"/>
        <dbReference type="ChEBI" id="CHEBI:30616"/>
        <dbReference type="ChEBI" id="CHEBI:61560"/>
        <dbReference type="ChEBI" id="CHEBI:73316"/>
        <dbReference type="ChEBI" id="CHEBI:456216"/>
        <dbReference type="EC" id="2.7.4.6"/>
    </reaction>
</comment>
<comment type="catalytic activity">
    <reaction evidence="1">
        <text>a ribonucleoside 5'-diphosphate + ATP = a ribonucleoside 5'-triphosphate + ADP</text>
        <dbReference type="Rhea" id="RHEA:18113"/>
        <dbReference type="ChEBI" id="CHEBI:30616"/>
        <dbReference type="ChEBI" id="CHEBI:57930"/>
        <dbReference type="ChEBI" id="CHEBI:61557"/>
        <dbReference type="ChEBI" id="CHEBI:456216"/>
        <dbReference type="EC" id="2.7.4.6"/>
    </reaction>
</comment>
<comment type="cofactor">
    <cofactor evidence="1">
        <name>Mg(2+)</name>
        <dbReference type="ChEBI" id="CHEBI:18420"/>
    </cofactor>
</comment>
<comment type="subunit">
    <text evidence="1">Homotetramer.</text>
</comment>
<comment type="subcellular location">
    <subcellularLocation>
        <location evidence="1">Cytoplasm</location>
    </subcellularLocation>
</comment>
<comment type="similarity">
    <text evidence="1">Belongs to the NDK family.</text>
</comment>
<gene>
    <name evidence="1" type="primary">ndk</name>
    <name type="ordered locus">DET0394</name>
</gene>
<sequence length="142" mass="15774">MERTLLLVKPDGVNRGLSGEILGRMEKLGLKMIGLRMLQMDAVLADKHYAPHRERPFFKDLVTYITSGPIVAAVFEGENAVEKMRKAMGATDPAKSEKGTVRGDLGINIEQNTVHGSDSAENAKHEISLFFSESELVNYDRR</sequence>
<keyword id="KW-0067">ATP-binding</keyword>
<keyword id="KW-0963">Cytoplasm</keyword>
<keyword id="KW-0418">Kinase</keyword>
<keyword id="KW-0460">Magnesium</keyword>
<keyword id="KW-0479">Metal-binding</keyword>
<keyword id="KW-0546">Nucleotide metabolism</keyword>
<keyword id="KW-0547">Nucleotide-binding</keyword>
<keyword id="KW-0597">Phosphoprotein</keyword>
<keyword id="KW-0808">Transferase</keyword>
<feature type="chain" id="PRO_0000226558" description="Nucleoside diphosphate kinase">
    <location>
        <begin position="1"/>
        <end position="142"/>
    </location>
</feature>
<feature type="region of interest" description="Disordered" evidence="2">
    <location>
        <begin position="87"/>
        <end position="106"/>
    </location>
</feature>
<feature type="active site" description="Pros-phosphohistidine intermediate" evidence="1">
    <location>
        <position position="115"/>
    </location>
</feature>
<feature type="binding site" evidence="1">
    <location>
        <position position="9"/>
    </location>
    <ligand>
        <name>ATP</name>
        <dbReference type="ChEBI" id="CHEBI:30616"/>
    </ligand>
</feature>
<feature type="binding site" evidence="1">
    <location>
        <position position="57"/>
    </location>
    <ligand>
        <name>ATP</name>
        <dbReference type="ChEBI" id="CHEBI:30616"/>
    </ligand>
</feature>
<feature type="binding site" evidence="1">
    <location>
        <position position="85"/>
    </location>
    <ligand>
        <name>ATP</name>
        <dbReference type="ChEBI" id="CHEBI:30616"/>
    </ligand>
</feature>
<feature type="binding site" evidence="1">
    <location>
        <position position="91"/>
    </location>
    <ligand>
        <name>ATP</name>
        <dbReference type="ChEBI" id="CHEBI:30616"/>
    </ligand>
</feature>
<feature type="binding site" evidence="1">
    <location>
        <position position="102"/>
    </location>
    <ligand>
        <name>ATP</name>
        <dbReference type="ChEBI" id="CHEBI:30616"/>
    </ligand>
</feature>
<feature type="binding site" evidence="1">
    <location>
        <position position="112"/>
    </location>
    <ligand>
        <name>ATP</name>
        <dbReference type="ChEBI" id="CHEBI:30616"/>
    </ligand>
</feature>
<evidence type="ECO:0000255" key="1">
    <source>
        <dbReference type="HAMAP-Rule" id="MF_00451"/>
    </source>
</evidence>
<evidence type="ECO:0000256" key="2">
    <source>
        <dbReference type="SAM" id="MobiDB-lite"/>
    </source>
</evidence>
<proteinExistence type="inferred from homology"/>
<organism>
    <name type="scientific">Dehalococcoides mccartyi (strain ATCC BAA-2266 / KCTC 15142 / 195)</name>
    <name type="common">Dehalococcoides ethenogenes (strain 195)</name>
    <dbReference type="NCBI Taxonomy" id="243164"/>
    <lineage>
        <taxon>Bacteria</taxon>
        <taxon>Bacillati</taxon>
        <taxon>Chloroflexota</taxon>
        <taxon>Dehalococcoidia</taxon>
        <taxon>Dehalococcoidales</taxon>
        <taxon>Dehalococcoidaceae</taxon>
        <taxon>Dehalococcoides</taxon>
    </lineage>
</organism>
<accession>Q3Z9G0</accession>
<protein>
    <recommendedName>
        <fullName evidence="1">Nucleoside diphosphate kinase</fullName>
        <shortName evidence="1">NDK</shortName>
        <shortName evidence="1">NDP kinase</shortName>
        <ecNumber evidence="1">2.7.4.6</ecNumber>
    </recommendedName>
    <alternativeName>
        <fullName evidence="1">Nucleoside-2-P kinase</fullName>
    </alternativeName>
</protein>
<reference key="1">
    <citation type="journal article" date="2005" name="Science">
        <title>Genome sequence of the PCE-dechlorinating bacterium Dehalococcoides ethenogenes.</title>
        <authorList>
            <person name="Seshadri R."/>
            <person name="Adrian L."/>
            <person name="Fouts D.E."/>
            <person name="Eisen J.A."/>
            <person name="Phillippy A.M."/>
            <person name="Methe B.A."/>
            <person name="Ward N.L."/>
            <person name="Nelson W.C."/>
            <person name="DeBoy R.T."/>
            <person name="Khouri H.M."/>
            <person name="Kolonay J.F."/>
            <person name="Dodson R.J."/>
            <person name="Daugherty S.C."/>
            <person name="Brinkac L.M."/>
            <person name="Sullivan S.A."/>
            <person name="Madupu R."/>
            <person name="Nelson K.E."/>
            <person name="Kang K.H."/>
            <person name="Impraim M."/>
            <person name="Tran K."/>
            <person name="Robinson J.M."/>
            <person name="Forberger H.A."/>
            <person name="Fraser C.M."/>
            <person name="Zinder S.H."/>
            <person name="Heidelberg J.F."/>
        </authorList>
    </citation>
    <scope>NUCLEOTIDE SEQUENCE [LARGE SCALE GENOMIC DNA]</scope>
    <source>
        <strain>ATCC BAA-2266 / KCTC 15142 / 195</strain>
    </source>
</reference>
<dbReference type="EC" id="2.7.4.6" evidence="1"/>
<dbReference type="EMBL" id="CP000027">
    <property type="protein sequence ID" value="AAW40306.1"/>
    <property type="molecule type" value="Genomic_DNA"/>
</dbReference>
<dbReference type="RefSeq" id="WP_010936172.1">
    <property type="nucleotide sequence ID" value="NC_002936.3"/>
</dbReference>
<dbReference type="SMR" id="Q3Z9G0"/>
<dbReference type="FunCoup" id="Q3Z9G0">
    <property type="interactions" value="312"/>
</dbReference>
<dbReference type="STRING" id="243164.DET0394"/>
<dbReference type="GeneID" id="3230270"/>
<dbReference type="KEGG" id="det:DET0394"/>
<dbReference type="eggNOG" id="COG0105">
    <property type="taxonomic scope" value="Bacteria"/>
</dbReference>
<dbReference type="HOGENOM" id="CLU_060216_6_3_0"/>
<dbReference type="InParanoid" id="Q3Z9G0"/>
<dbReference type="Proteomes" id="UP000008289">
    <property type="component" value="Chromosome"/>
</dbReference>
<dbReference type="GO" id="GO:0005737">
    <property type="term" value="C:cytoplasm"/>
    <property type="evidence" value="ECO:0007669"/>
    <property type="project" value="UniProtKB-SubCell"/>
</dbReference>
<dbReference type="GO" id="GO:0005524">
    <property type="term" value="F:ATP binding"/>
    <property type="evidence" value="ECO:0007669"/>
    <property type="project" value="UniProtKB-UniRule"/>
</dbReference>
<dbReference type="GO" id="GO:0046872">
    <property type="term" value="F:metal ion binding"/>
    <property type="evidence" value="ECO:0007669"/>
    <property type="project" value="UniProtKB-KW"/>
</dbReference>
<dbReference type="GO" id="GO:0004550">
    <property type="term" value="F:nucleoside diphosphate kinase activity"/>
    <property type="evidence" value="ECO:0007669"/>
    <property type="project" value="UniProtKB-UniRule"/>
</dbReference>
<dbReference type="GO" id="GO:0006241">
    <property type="term" value="P:CTP biosynthetic process"/>
    <property type="evidence" value="ECO:0007669"/>
    <property type="project" value="UniProtKB-UniRule"/>
</dbReference>
<dbReference type="GO" id="GO:0006183">
    <property type="term" value="P:GTP biosynthetic process"/>
    <property type="evidence" value="ECO:0007669"/>
    <property type="project" value="UniProtKB-UniRule"/>
</dbReference>
<dbReference type="GO" id="GO:0006228">
    <property type="term" value="P:UTP biosynthetic process"/>
    <property type="evidence" value="ECO:0007669"/>
    <property type="project" value="UniProtKB-UniRule"/>
</dbReference>
<dbReference type="CDD" id="cd04413">
    <property type="entry name" value="NDPk_I"/>
    <property type="match status" value="1"/>
</dbReference>
<dbReference type="FunFam" id="3.30.70.141:FF:000025">
    <property type="entry name" value="Nucleoside diphosphate kinase"/>
    <property type="match status" value="1"/>
</dbReference>
<dbReference type="Gene3D" id="3.30.70.141">
    <property type="entry name" value="Nucleoside diphosphate kinase-like domain"/>
    <property type="match status" value="1"/>
</dbReference>
<dbReference type="HAMAP" id="MF_00451">
    <property type="entry name" value="NDP_kinase"/>
    <property type="match status" value="1"/>
</dbReference>
<dbReference type="InterPro" id="IPR034907">
    <property type="entry name" value="NDK-like_dom"/>
</dbReference>
<dbReference type="InterPro" id="IPR036850">
    <property type="entry name" value="NDK-like_dom_sf"/>
</dbReference>
<dbReference type="InterPro" id="IPR001564">
    <property type="entry name" value="Nucleoside_diP_kinase"/>
</dbReference>
<dbReference type="NCBIfam" id="NF001908">
    <property type="entry name" value="PRK00668.1"/>
    <property type="match status" value="1"/>
</dbReference>
<dbReference type="PANTHER" id="PTHR11349">
    <property type="entry name" value="NUCLEOSIDE DIPHOSPHATE KINASE"/>
    <property type="match status" value="1"/>
</dbReference>
<dbReference type="Pfam" id="PF00334">
    <property type="entry name" value="NDK"/>
    <property type="match status" value="1"/>
</dbReference>
<dbReference type="PRINTS" id="PR01243">
    <property type="entry name" value="NUCDPKINASE"/>
</dbReference>
<dbReference type="SMART" id="SM00562">
    <property type="entry name" value="NDK"/>
    <property type="match status" value="1"/>
</dbReference>
<dbReference type="SUPFAM" id="SSF54919">
    <property type="entry name" value="Nucleoside diphosphate kinase, NDK"/>
    <property type="match status" value="1"/>
</dbReference>
<dbReference type="PROSITE" id="PS51374">
    <property type="entry name" value="NDPK_LIKE"/>
    <property type="match status" value="1"/>
</dbReference>